<keyword id="KW-0002">3D-structure</keyword>
<keyword id="KW-0025">Alternative splicing</keyword>
<keyword id="KW-1003">Cell membrane</keyword>
<keyword id="KW-0963">Cytoplasm</keyword>
<keyword id="KW-0225">Disease variant</keyword>
<keyword id="KW-0472">Membrane</keyword>
<keyword id="KW-0479">Metal-binding</keyword>
<keyword id="KW-1267">Proteomics identification</keyword>
<keyword id="KW-1185">Reference proteome</keyword>
<keyword id="KW-0677">Repeat</keyword>
<keyword id="KW-0728">SH3 domain</keyword>
<keyword id="KW-0862">Zinc</keyword>
<keyword id="KW-0863">Zinc-finger</keyword>
<comment type="function">
    <text evidence="1 5 7">Required for normal excitation-contraction coupling in skeletal muscle and for normal muscle contraction in response to membrane depolarization. Required for normal Ca(2+) release from the sarcplasmic reticulum, which ultimately leads to muscle contraction. Probably functions via its effects on muscle calcium channels (PubMed:23736855, PubMed:29078335). Increases CACNA1S channel activity, in addition to its role in enhancing the expression of CACNA1S at the cell membrane. Has a redundant role in promoting the expression of the calcium channel CACNA1S at the cell membrane (By similarity). Slows down the inactivation rate of the calcium channel CACNA1C (PubMed:29078335).</text>
</comment>
<comment type="subunit">
    <text evidence="1 7">Interacts (via SH3 domains) with the calcium channels CACNA1S and CACNA1C (PubMed:29078335). Component of a calcium channel complex with CACNA1S and CACNB1. Component of a calcium channel complex with CACNA1C and CACNB1 (By similarity).</text>
</comment>
<comment type="interaction">
    <interactant intactId="EBI-745680">
        <id>Q96MF2</id>
    </interactant>
    <interactant intactId="EBI-14100900">
        <id>A1A5B0</id>
        <label>ANKRD36</label>
    </interactant>
    <organismsDiffer>false</organismsDiffer>
    <experiments>3</experiments>
</comment>
<comment type="interaction">
    <interactant intactId="EBI-745680">
        <id>Q96MF2</id>
    </interactant>
    <interactant intactId="EBI-10321972">
        <id>Q9UIF8-2</id>
        <label>BAZ2B</label>
    </interactant>
    <organismsDiffer>false</organismsDiffer>
    <experiments>3</experiments>
</comment>
<comment type="interaction">
    <interactant intactId="EBI-745680">
        <id>Q96MF2</id>
    </interactant>
    <interactant intactId="EBI-347804">
        <id>P68400</id>
        <label>CSNK2A1</label>
    </interactant>
    <organismsDiffer>false</organismsDiffer>
    <experiments>7</experiments>
</comment>
<comment type="interaction">
    <interactant intactId="EBI-745680">
        <id>Q96MF2</id>
    </interactant>
    <interactant intactId="EBI-742054">
        <id>Q96D03</id>
        <label>DDIT4L</label>
    </interactant>
    <organismsDiffer>false</organismsDiffer>
    <experiments>3</experiments>
</comment>
<comment type="interaction">
    <interactant intactId="EBI-745680">
        <id>Q96MF2</id>
    </interactant>
    <interactant intactId="EBI-10233719">
        <id>Q14689-6</id>
        <label>DIP2A</label>
    </interactant>
    <organismsDiffer>false</organismsDiffer>
    <experiments>3</experiments>
</comment>
<comment type="interaction">
    <interactant intactId="EBI-745680">
        <id>Q96MF2</id>
    </interactant>
    <interactant intactId="EBI-769261">
        <id>Q96JC9</id>
        <label>EAF1</label>
    </interactant>
    <organismsDiffer>false</organismsDiffer>
    <experiments>5</experiments>
</comment>
<comment type="interaction">
    <interactant intactId="EBI-745680">
        <id>Q96MF2</id>
    </interactant>
    <interactant intactId="EBI-744099">
        <id>Q9H0I2</id>
        <label>ENKD1</label>
    </interactant>
    <organismsDiffer>false</organismsDiffer>
    <experiments>4</experiments>
</comment>
<comment type="interaction">
    <interactant intactId="EBI-745680">
        <id>Q96MF2</id>
    </interactant>
    <interactant intactId="EBI-744506">
        <id>Q86V42</id>
        <label>FAM124A</label>
    </interactant>
    <organismsDiffer>false</organismsDiffer>
    <experiments>3</experiments>
</comment>
<comment type="interaction">
    <interactant intactId="EBI-745680">
        <id>Q96MF2</id>
    </interactant>
    <interactant intactId="EBI-10268158">
        <id>Q8N9E0</id>
        <label>FAM133A</label>
    </interactant>
    <organismsDiffer>false</organismsDiffer>
    <experiments>6</experiments>
</comment>
<comment type="interaction">
    <interactant intactId="EBI-745680">
        <id>Q96MF2</id>
    </interactant>
    <interactant intactId="EBI-6658203">
        <id>Q86YD7</id>
        <label>FAM90A1</label>
    </interactant>
    <organismsDiffer>false</organismsDiffer>
    <experiments>6</experiments>
</comment>
<comment type="interaction">
    <interactant intactId="EBI-745680">
        <id>Q96MF2</id>
    </interactant>
    <interactant intactId="EBI-8468186">
        <id>Q8IZU1</id>
        <label>FAM9A</label>
    </interactant>
    <organismsDiffer>false</organismsDiffer>
    <experiments>3</experiments>
</comment>
<comment type="interaction">
    <interactant intactId="EBI-745680">
        <id>Q96MF2</id>
    </interactant>
    <interactant intactId="EBI-11987787">
        <id>Q92914</id>
        <label>FGF11</label>
    </interactant>
    <organismsDiffer>false</organismsDiffer>
    <experiments>3</experiments>
</comment>
<comment type="interaction">
    <interactant intactId="EBI-745680">
        <id>Q96MF2</id>
    </interactant>
    <interactant intactId="EBI-10699759">
        <id>P61328-2</id>
        <label>FGF12</label>
    </interactant>
    <organismsDiffer>false</organismsDiffer>
    <experiments>3</experiments>
</comment>
<comment type="interaction">
    <interactant intactId="EBI-745680">
        <id>Q96MF2</id>
    </interactant>
    <interactant intactId="EBI-1052570">
        <id>O95995</id>
        <label>GAS8</label>
    </interactant>
    <organismsDiffer>false</organismsDiffer>
    <experiments>3</experiments>
</comment>
<comment type="interaction">
    <interactant intactId="EBI-745680">
        <id>Q96MF2</id>
    </interactant>
    <interactant intactId="EBI-947774">
        <id>O75420</id>
        <label>GIGYF1</label>
    </interactant>
    <organismsDiffer>false</organismsDiffer>
    <experiments>4</experiments>
</comment>
<comment type="interaction">
    <interactant intactId="EBI-745680">
        <id>Q96MF2</id>
    </interactant>
    <interactant intactId="EBI-11991632">
        <id>Q14451-3</id>
        <label>GRB7</label>
    </interactant>
    <organismsDiffer>false</organismsDiffer>
    <experiments>3</experiments>
</comment>
<comment type="interaction">
    <interactant intactId="EBI-745680">
        <id>Q96MF2</id>
    </interactant>
    <interactant intactId="EBI-7261162">
        <id>Q9UGU5</id>
        <label>HMGXB4</label>
    </interactant>
    <organismsDiffer>false</organismsDiffer>
    <experiments>3</experiments>
</comment>
<comment type="interaction">
    <interactant intactId="EBI-745680">
        <id>Q96MF2</id>
    </interactant>
    <interactant intactId="EBI-715611">
        <id>Q9C086</id>
        <label>INO80B</label>
    </interactant>
    <organismsDiffer>false</organismsDiffer>
    <experiments>3</experiments>
</comment>
<comment type="interaction">
    <interactant intactId="EBI-745680">
        <id>Q96MF2</id>
    </interactant>
    <interactant intactId="EBI-739909">
        <id>Q969R5</id>
        <label>L3MBTL2</label>
    </interactant>
    <organismsDiffer>false</organismsDiffer>
    <experiments>6</experiments>
</comment>
<comment type="interaction">
    <interactant intactId="EBI-745680">
        <id>Q96MF2</id>
    </interactant>
    <interactant intactId="EBI-10268010">
        <id>Q8N8X9</id>
        <label>MAB21L3</label>
    </interactant>
    <organismsDiffer>false</organismsDiffer>
    <experiments>7</experiments>
</comment>
<comment type="interaction">
    <interactant intactId="EBI-745680">
        <id>Q96MF2</id>
    </interactant>
    <interactant intactId="EBI-1048159">
        <id>P55081</id>
        <label>MFAP1</label>
    </interactant>
    <organismsDiffer>false</organismsDiffer>
    <experiments>3</experiments>
</comment>
<comment type="interaction">
    <interactant intactId="EBI-745680">
        <id>Q96MF2</id>
    </interactant>
    <interactant intactId="EBI-742459">
        <id>Q9BU76</id>
        <label>MMTAG2</label>
    </interactant>
    <organismsDiffer>false</organismsDiffer>
    <experiments>5</experiments>
</comment>
<comment type="interaction">
    <interactant intactId="EBI-745680">
        <id>Q96MF2</id>
    </interactant>
    <interactant intactId="EBI-3920396">
        <id>Q6ZUT1</id>
        <label>NKAPD1</label>
    </interactant>
    <organismsDiffer>false</organismsDiffer>
    <experiments>6</experiments>
</comment>
<comment type="interaction">
    <interactant intactId="EBI-745680">
        <id>Q96MF2</id>
    </interactant>
    <interactant intactId="EBI-10180231">
        <id>Q6ZUT1-2</id>
        <label>NKAPD1</label>
    </interactant>
    <organismsDiffer>false</organismsDiffer>
    <experiments>3</experiments>
</comment>
<comment type="interaction">
    <interactant intactId="EBI-745680">
        <id>Q96MF2</id>
    </interactant>
    <interactant intactId="EBI-50433196">
        <id>A0A6Q8PF08</id>
        <label>PMP22</label>
    </interactant>
    <organismsDiffer>false</organismsDiffer>
    <experiments>3</experiments>
</comment>
<comment type="interaction">
    <interactant intactId="EBI-745680">
        <id>Q96MF2</id>
    </interactant>
    <interactant intactId="EBI-354533">
        <id>P35268</id>
        <label>RPL22</label>
    </interactant>
    <organismsDiffer>false</organismsDiffer>
    <experiments>3</experiments>
</comment>
<comment type="interaction">
    <interactant intactId="EBI-745680">
        <id>Q96MF2</id>
    </interactant>
    <interactant intactId="EBI-358122">
        <id>P32969</id>
        <label>RPL9P9</label>
    </interactant>
    <organismsDiffer>false</organismsDiffer>
    <experiments>3</experiments>
</comment>
<comment type="interaction">
    <interactant intactId="EBI-745680">
        <id>Q96MF2</id>
    </interactant>
    <interactant intactId="EBI-353054">
        <id>P62851</id>
        <label>RPS25</label>
    </interactant>
    <organismsDiffer>false</organismsDiffer>
    <experiments>3</experiments>
</comment>
<comment type="interaction">
    <interactant intactId="EBI-745680">
        <id>Q96MF2</id>
    </interactant>
    <interactant intactId="EBI-990792">
        <id>P00441</id>
        <label>SOD1</label>
    </interactant>
    <organismsDiffer>false</organismsDiffer>
    <experiments>3</experiments>
</comment>
<comment type="interaction">
    <interactant intactId="EBI-745680">
        <id>Q96MF2</id>
    </interactant>
    <interactant intactId="EBI-12023934">
        <id>Q5MJ10</id>
        <label>SPANXN2</label>
    </interactant>
    <organismsDiffer>false</organismsDiffer>
    <experiments>3</experiments>
</comment>
<comment type="interaction">
    <interactant intactId="EBI-745680">
        <id>Q96MF2</id>
    </interactant>
    <interactant intactId="EBI-12037215">
        <id>Q5MJ09</id>
        <label>SPANXN3</label>
    </interactant>
    <organismsDiffer>false</organismsDiffer>
    <experiments>3</experiments>
</comment>
<comment type="interaction">
    <interactant intactId="EBI-745680">
        <id>Q96MF2</id>
    </interactant>
    <interactant intactId="EBI-10268630">
        <id>Q8N9Q2</id>
        <label>SREK1IP1</label>
    </interactant>
    <organismsDiffer>false</organismsDiffer>
    <experiments>6</experiments>
</comment>
<comment type="interaction">
    <interactant intactId="EBI-745680">
        <id>Q96MF2</id>
    </interactant>
    <interactant intactId="EBI-745680">
        <id>Q96MF2</id>
        <label>STAC3</label>
    </interactant>
    <organismsDiffer>false</organismsDiffer>
    <experiments>6</experiments>
</comment>
<comment type="interaction">
    <interactant intactId="EBI-745680">
        <id>Q96MF2</id>
    </interactant>
    <interactant intactId="EBI-710310">
        <id>Q15560</id>
        <label>TCEA2</label>
    </interactant>
    <organismsDiffer>false</organismsDiffer>
    <experiments>3</experiments>
</comment>
<comment type="interaction">
    <interactant intactId="EBI-745680">
        <id>Q96MF2</id>
    </interactant>
    <interactant intactId="EBI-752102">
        <id>Q8WVP5</id>
        <label>TNFAIP8L1</label>
    </interactant>
    <organismsDiffer>false</organismsDiffer>
    <experiments>3</experiments>
</comment>
<comment type="interaction">
    <interactant intactId="EBI-745680">
        <id>Q96MF2</id>
    </interactant>
    <interactant intactId="EBI-11097439">
        <id>P26368-2</id>
        <label>U2AF2</label>
    </interactant>
    <organismsDiffer>false</organismsDiffer>
    <experiments>3</experiments>
</comment>
<comment type="interaction">
    <interactant intactId="EBI-745680">
        <id>Q96MF2</id>
    </interactant>
    <interactant intactId="EBI-11983741">
        <id>Q3SXR9</id>
        <label>VCX2</label>
    </interactant>
    <organismsDiffer>false</organismsDiffer>
    <experiments>3</experiments>
</comment>
<comment type="interaction">
    <interactant intactId="EBI-745680">
        <id>Q96MF2</id>
    </interactant>
    <interactant intactId="EBI-597063">
        <id>Q8TBK6</id>
        <label>ZCCHC10</label>
    </interactant>
    <organismsDiffer>false</organismsDiffer>
    <experiments>7</experiments>
</comment>
<comment type="interaction">
    <interactant intactId="EBI-745680">
        <id>Q96MF2</id>
    </interactant>
    <interactant intactId="EBI-3439227">
        <id>Q8N5A5</id>
        <label>ZGPAT</label>
    </interactant>
    <organismsDiffer>false</organismsDiffer>
    <experiments>3</experiments>
</comment>
<comment type="interaction">
    <interactant intactId="EBI-745680">
        <id>Q96MF2</id>
    </interactant>
    <interactant intactId="EBI-10183064">
        <id>Q8N5A5-2</id>
        <label>ZGPAT</label>
    </interactant>
    <organismsDiffer>false</organismsDiffer>
    <experiments>3</experiments>
</comment>
<comment type="subcellular location">
    <subcellularLocation>
        <location evidence="1">Cytoplasm</location>
    </subcellularLocation>
    <subcellularLocation>
        <location evidence="1">Cell membrane</location>
        <location evidence="1">Sarcolemma</location>
        <topology evidence="1">Peripheral membrane protein</topology>
        <orientation evidence="1">Cytoplasmic side</orientation>
    </subcellularLocation>
    <subcellularLocation>
        <location evidence="1">Cell membrane</location>
        <location evidence="1">Sarcolemma</location>
        <location evidence="1">T-tubule</location>
    </subcellularLocation>
    <text evidence="1">Co-localizes with CACNA1S and CACNA1C on T-tubules.</text>
</comment>
<comment type="alternative products">
    <event type="alternative splicing"/>
    <isoform>
        <id>Q96MF2-1</id>
        <name>1</name>
        <sequence type="displayed"/>
    </isoform>
    <isoform>
        <id>Q96MF2-2</id>
        <name>2</name>
        <sequence type="described" ref="VSP_017914"/>
    </isoform>
    <isoform>
        <id>Q96MF2-3</id>
        <name>3</name>
        <sequence type="described" ref="VSP_055272"/>
    </isoform>
</comment>
<comment type="disease" evidence="5 6 7">
    <disease id="DI-03974">
        <name>Congenital myopathy 13</name>
        <acronym>CMYO13</acronym>
        <description>An autosomal recessive disease characterized by congenital weakness and arthrogryposis, cleft palate, ptosis, short stature, kyphoscoliosis, talipes deformities, and susceptibility to malignant hyperthermia provoked by anesthesia.</description>
        <dbReference type="MIM" id="255995"/>
    </disease>
    <text>The disease is caused by variants affecting the gene represented in this entry.</text>
</comment>
<name>STAC3_HUMAN</name>
<protein>
    <recommendedName>
        <fullName>SH3 and cysteine-rich domain-containing protein 3</fullName>
    </recommendedName>
</protein>
<accession>Q96MF2</accession>
<accession>B4DUK9</accession>
<accession>Q96HU5</accession>
<organism>
    <name type="scientific">Homo sapiens</name>
    <name type="common">Human</name>
    <dbReference type="NCBI Taxonomy" id="9606"/>
    <lineage>
        <taxon>Eukaryota</taxon>
        <taxon>Metazoa</taxon>
        <taxon>Chordata</taxon>
        <taxon>Craniata</taxon>
        <taxon>Vertebrata</taxon>
        <taxon>Euteleostomi</taxon>
        <taxon>Mammalia</taxon>
        <taxon>Eutheria</taxon>
        <taxon>Euarchontoglires</taxon>
        <taxon>Primates</taxon>
        <taxon>Haplorrhini</taxon>
        <taxon>Catarrhini</taxon>
        <taxon>Hominidae</taxon>
        <taxon>Homo</taxon>
    </lineage>
</organism>
<dbReference type="EMBL" id="AK057013">
    <property type="protein sequence ID" value="BAB71343.1"/>
    <property type="molecule type" value="mRNA"/>
</dbReference>
<dbReference type="EMBL" id="AK300688">
    <property type="protein sequence ID" value="BAG62371.1"/>
    <property type="molecule type" value="mRNA"/>
</dbReference>
<dbReference type="EMBL" id="AC137834">
    <property type="status" value="NOT_ANNOTATED_CDS"/>
    <property type="molecule type" value="Genomic_DNA"/>
</dbReference>
<dbReference type="EMBL" id="CH471054">
    <property type="protein sequence ID" value="EAW97005.1"/>
    <property type="molecule type" value="Genomic_DNA"/>
</dbReference>
<dbReference type="EMBL" id="BC008069">
    <property type="protein sequence ID" value="AAH08069.1"/>
    <property type="molecule type" value="mRNA"/>
</dbReference>
<dbReference type="CCDS" id="CCDS66405.1">
    <molecule id="Q96MF2-3"/>
</dbReference>
<dbReference type="CCDS" id="CCDS66406.1">
    <molecule id="Q96MF2-2"/>
</dbReference>
<dbReference type="CCDS" id="CCDS8936.1">
    <molecule id="Q96MF2-1"/>
</dbReference>
<dbReference type="RefSeq" id="NP_001273185.1">
    <molecule id="Q96MF2-2"/>
    <property type="nucleotide sequence ID" value="NM_001286256.2"/>
</dbReference>
<dbReference type="RefSeq" id="NP_001273186.1">
    <molecule id="Q96MF2-3"/>
    <property type="nucleotide sequence ID" value="NM_001286257.2"/>
</dbReference>
<dbReference type="RefSeq" id="NP_659501.1">
    <molecule id="Q96MF2-1"/>
    <property type="nucleotide sequence ID" value="NM_145064.3"/>
</dbReference>
<dbReference type="RefSeq" id="XP_011536428.1">
    <molecule id="Q96MF2-1"/>
    <property type="nucleotide sequence ID" value="XM_011538126.3"/>
</dbReference>
<dbReference type="RefSeq" id="XP_054227624.1">
    <molecule id="Q96MF2-1"/>
    <property type="nucleotide sequence ID" value="XM_054371649.1"/>
</dbReference>
<dbReference type="PDB" id="2DB6">
    <property type="method" value="NMR"/>
    <property type="chains" value="A=80-140"/>
</dbReference>
<dbReference type="PDB" id="6B29">
    <property type="method" value="X-ray"/>
    <property type="resolution" value="1.30 A"/>
    <property type="chains" value="A/B/C/D=309-364"/>
</dbReference>
<dbReference type="PDB" id="6UY7">
    <property type="method" value="X-ray"/>
    <property type="resolution" value="2.10 A"/>
    <property type="chains" value="A=245-364"/>
</dbReference>
<dbReference type="PDB" id="6UY8">
    <property type="method" value="X-ray"/>
    <property type="resolution" value="1.65 A"/>
    <property type="chains" value="A/B=245-364"/>
</dbReference>
<dbReference type="PDB" id="6UY9">
    <property type="method" value="X-ray"/>
    <property type="resolution" value="1.60 A"/>
    <property type="chains" value="A=245-364"/>
</dbReference>
<dbReference type="PDBsum" id="2DB6"/>
<dbReference type="PDBsum" id="6B29"/>
<dbReference type="PDBsum" id="6UY7"/>
<dbReference type="PDBsum" id="6UY8"/>
<dbReference type="PDBsum" id="6UY9"/>
<dbReference type="SMR" id="Q96MF2"/>
<dbReference type="BioGRID" id="128899">
    <property type="interactions" value="45"/>
</dbReference>
<dbReference type="FunCoup" id="Q96MF2">
    <property type="interactions" value="5"/>
</dbReference>
<dbReference type="IntAct" id="Q96MF2">
    <property type="interactions" value="45"/>
</dbReference>
<dbReference type="MINT" id="Q96MF2"/>
<dbReference type="STRING" id="9606.ENSP00000329200"/>
<dbReference type="iPTMnet" id="Q96MF2"/>
<dbReference type="PhosphoSitePlus" id="Q96MF2"/>
<dbReference type="BioMuta" id="STAC3"/>
<dbReference type="DMDM" id="74732360"/>
<dbReference type="jPOST" id="Q96MF2"/>
<dbReference type="MassIVE" id="Q96MF2"/>
<dbReference type="PaxDb" id="9606-ENSP00000329200"/>
<dbReference type="PeptideAtlas" id="Q96MF2"/>
<dbReference type="ProteomicsDB" id="5195"/>
<dbReference type="ProteomicsDB" id="77345">
    <molecule id="Q96MF2-1"/>
</dbReference>
<dbReference type="ProteomicsDB" id="77346">
    <molecule id="Q96MF2-2"/>
</dbReference>
<dbReference type="Antibodypedia" id="28547">
    <property type="antibodies" value="87 antibodies from 24 providers"/>
</dbReference>
<dbReference type="DNASU" id="246329"/>
<dbReference type="Ensembl" id="ENST00000332782.7">
    <molecule id="Q96MF2-1"/>
    <property type="protein sequence ID" value="ENSP00000329200.2"/>
    <property type="gene ID" value="ENSG00000185482.8"/>
</dbReference>
<dbReference type="Ensembl" id="ENST00000546246.2">
    <molecule id="Q96MF2-3"/>
    <property type="protein sequence ID" value="ENSP00000441515.2"/>
    <property type="gene ID" value="ENSG00000185482.8"/>
</dbReference>
<dbReference type="Ensembl" id="ENST00000554578.5">
    <molecule id="Q96MF2-2"/>
    <property type="protein sequence ID" value="ENSP00000452068.1"/>
    <property type="gene ID" value="ENSG00000185482.8"/>
</dbReference>
<dbReference type="GeneID" id="246329"/>
<dbReference type="KEGG" id="hsa:246329"/>
<dbReference type="MANE-Select" id="ENST00000332782.7">
    <property type="protein sequence ID" value="ENSP00000329200.2"/>
    <property type="RefSeq nucleotide sequence ID" value="NM_145064.3"/>
    <property type="RefSeq protein sequence ID" value="NP_659501.1"/>
</dbReference>
<dbReference type="UCSC" id="uc001snp.4">
    <molecule id="Q96MF2-1"/>
    <property type="organism name" value="human"/>
</dbReference>
<dbReference type="AGR" id="HGNC:28423"/>
<dbReference type="CTD" id="246329"/>
<dbReference type="DisGeNET" id="246329"/>
<dbReference type="GeneCards" id="STAC3"/>
<dbReference type="GeneReviews" id="STAC3"/>
<dbReference type="HGNC" id="HGNC:28423">
    <property type="gene designation" value="STAC3"/>
</dbReference>
<dbReference type="HPA" id="ENSG00000185482">
    <property type="expression patterns" value="Group enriched (skeletal muscle, tongue)"/>
</dbReference>
<dbReference type="MalaCards" id="STAC3"/>
<dbReference type="MIM" id="255995">
    <property type="type" value="phenotype"/>
</dbReference>
<dbReference type="MIM" id="615521">
    <property type="type" value="gene"/>
</dbReference>
<dbReference type="neXtProt" id="NX_Q96MF2"/>
<dbReference type="OpenTargets" id="ENSG00000185482"/>
<dbReference type="Orphanet" id="168572">
    <property type="disease" value="Native American myopathy"/>
</dbReference>
<dbReference type="PharmGKB" id="PA134877600"/>
<dbReference type="VEuPathDB" id="HostDB:ENSG00000185482"/>
<dbReference type="eggNOG" id="ENOG502QT6I">
    <property type="taxonomic scope" value="Eukaryota"/>
</dbReference>
<dbReference type="GeneTree" id="ENSGT00950000183092"/>
<dbReference type="HOGENOM" id="CLU_048120_1_1_1"/>
<dbReference type="InParanoid" id="Q96MF2"/>
<dbReference type="OMA" id="NEEWWRI"/>
<dbReference type="OrthoDB" id="6250593at2759"/>
<dbReference type="PAN-GO" id="Q96MF2">
    <property type="GO annotations" value="4 GO annotations based on evolutionary models"/>
</dbReference>
<dbReference type="PhylomeDB" id="Q96MF2"/>
<dbReference type="TreeFam" id="TF332878"/>
<dbReference type="PathwayCommons" id="Q96MF2"/>
<dbReference type="SignaLink" id="Q96MF2"/>
<dbReference type="BioGRID-ORCS" id="246329">
    <property type="hits" value="33 hits in 1147 CRISPR screens"/>
</dbReference>
<dbReference type="EvolutionaryTrace" id="Q96MF2"/>
<dbReference type="GenomeRNAi" id="246329"/>
<dbReference type="Pharos" id="Q96MF2">
    <property type="development level" value="Tbio"/>
</dbReference>
<dbReference type="PRO" id="PR:Q96MF2"/>
<dbReference type="Proteomes" id="UP000005640">
    <property type="component" value="Chromosome 12"/>
</dbReference>
<dbReference type="RNAct" id="Q96MF2">
    <property type="molecule type" value="protein"/>
</dbReference>
<dbReference type="Bgee" id="ENSG00000185482">
    <property type="expression patterns" value="Expressed in gastrocnemius and 114 other cell types or tissues"/>
</dbReference>
<dbReference type="ExpressionAtlas" id="Q96MF2">
    <property type="expression patterns" value="baseline and differential"/>
</dbReference>
<dbReference type="GO" id="GO:0009898">
    <property type="term" value="C:cytoplasmic side of plasma membrane"/>
    <property type="evidence" value="ECO:0000250"/>
    <property type="project" value="UniProtKB"/>
</dbReference>
<dbReference type="GO" id="GO:0005829">
    <property type="term" value="C:cytosol"/>
    <property type="evidence" value="ECO:0000314"/>
    <property type="project" value="HPA"/>
</dbReference>
<dbReference type="GO" id="GO:0005654">
    <property type="term" value="C:nucleoplasm"/>
    <property type="evidence" value="ECO:0000314"/>
    <property type="project" value="HPA"/>
</dbReference>
<dbReference type="GO" id="GO:0045202">
    <property type="term" value="C:synapse"/>
    <property type="evidence" value="ECO:0007669"/>
    <property type="project" value="GOC"/>
</dbReference>
<dbReference type="GO" id="GO:0030315">
    <property type="term" value="C:T-tubule"/>
    <property type="evidence" value="ECO:0007669"/>
    <property type="project" value="UniProtKB-SubCell"/>
</dbReference>
<dbReference type="GO" id="GO:0005891">
    <property type="term" value="C:voltage-gated calcium channel complex"/>
    <property type="evidence" value="ECO:0000250"/>
    <property type="project" value="UniProtKB"/>
</dbReference>
<dbReference type="GO" id="GO:0042802">
    <property type="term" value="F:identical protein binding"/>
    <property type="evidence" value="ECO:0000353"/>
    <property type="project" value="IntAct"/>
</dbReference>
<dbReference type="GO" id="GO:0008270">
    <property type="term" value="F:zinc ion binding"/>
    <property type="evidence" value="ECO:0007669"/>
    <property type="project" value="UniProtKB-KW"/>
</dbReference>
<dbReference type="GO" id="GO:0007274">
    <property type="term" value="P:neuromuscular synaptic transmission"/>
    <property type="evidence" value="ECO:0000315"/>
    <property type="project" value="UniProtKB"/>
</dbReference>
<dbReference type="GO" id="GO:1903078">
    <property type="term" value="P:positive regulation of protein localization to plasma membrane"/>
    <property type="evidence" value="ECO:0000250"/>
    <property type="project" value="UniProtKB"/>
</dbReference>
<dbReference type="GO" id="GO:1901387">
    <property type="term" value="P:positive regulation of voltage-gated calcium channel activity"/>
    <property type="evidence" value="ECO:0000250"/>
    <property type="project" value="UniProtKB"/>
</dbReference>
<dbReference type="GO" id="GO:0003009">
    <property type="term" value="P:skeletal muscle contraction"/>
    <property type="evidence" value="ECO:0000315"/>
    <property type="project" value="UniProtKB"/>
</dbReference>
<dbReference type="GO" id="GO:0048741">
    <property type="term" value="P:skeletal muscle fiber development"/>
    <property type="evidence" value="ECO:0007669"/>
    <property type="project" value="Ensembl"/>
</dbReference>
<dbReference type="CDD" id="cd20882">
    <property type="entry name" value="C1_Stac3"/>
    <property type="match status" value="1"/>
</dbReference>
<dbReference type="CDD" id="cd11986">
    <property type="entry name" value="SH3_Stac3_1"/>
    <property type="match status" value="1"/>
</dbReference>
<dbReference type="CDD" id="cd11834">
    <property type="entry name" value="SH3_Stac_2"/>
    <property type="match status" value="1"/>
</dbReference>
<dbReference type="FunFam" id="3.30.60.20:FF:000022">
    <property type="entry name" value="SH3 and cysteine-rich domain-containing protein 3 isoform 2"/>
    <property type="match status" value="1"/>
</dbReference>
<dbReference type="FunFam" id="2.30.30.40:FF:000167">
    <property type="entry name" value="SH3 and cysteine-rich domain-containing protein 3 isoform X1"/>
    <property type="match status" value="1"/>
</dbReference>
<dbReference type="Gene3D" id="3.30.60.20">
    <property type="match status" value="1"/>
</dbReference>
<dbReference type="Gene3D" id="2.30.30.40">
    <property type="entry name" value="SH3 Domains"/>
    <property type="match status" value="1"/>
</dbReference>
<dbReference type="InterPro" id="IPR046349">
    <property type="entry name" value="C1-like_sf"/>
</dbReference>
<dbReference type="InterPro" id="IPR002219">
    <property type="entry name" value="PE/DAG-bd"/>
</dbReference>
<dbReference type="InterPro" id="IPR036028">
    <property type="entry name" value="SH3-like_dom_sf"/>
</dbReference>
<dbReference type="InterPro" id="IPR001452">
    <property type="entry name" value="SH3_domain"/>
</dbReference>
<dbReference type="InterPro" id="IPR039688">
    <property type="entry name" value="STAC1/2/3"/>
</dbReference>
<dbReference type="InterPro" id="IPR035736">
    <property type="entry name" value="Stac3_SH3_1"/>
</dbReference>
<dbReference type="PANTHER" id="PTHR15135:SF2">
    <property type="entry name" value="SH3 AND CYSTEINE-RICH DOMAIN-CONTAINING PROTEIN 3"/>
    <property type="match status" value="1"/>
</dbReference>
<dbReference type="PANTHER" id="PTHR15135">
    <property type="entry name" value="STAC"/>
    <property type="match status" value="1"/>
</dbReference>
<dbReference type="Pfam" id="PF00130">
    <property type="entry name" value="C1_1"/>
    <property type="match status" value="1"/>
</dbReference>
<dbReference type="Pfam" id="PF00018">
    <property type="entry name" value="SH3_1"/>
    <property type="match status" value="1"/>
</dbReference>
<dbReference type="Pfam" id="PF07653">
    <property type="entry name" value="SH3_2"/>
    <property type="match status" value="1"/>
</dbReference>
<dbReference type="Pfam" id="PF16664">
    <property type="entry name" value="STAC2_u1"/>
    <property type="match status" value="1"/>
</dbReference>
<dbReference type="PRINTS" id="PR00499">
    <property type="entry name" value="P67PHOX"/>
</dbReference>
<dbReference type="PRINTS" id="PR00452">
    <property type="entry name" value="SH3DOMAIN"/>
</dbReference>
<dbReference type="SMART" id="SM00109">
    <property type="entry name" value="C1"/>
    <property type="match status" value="1"/>
</dbReference>
<dbReference type="SMART" id="SM00326">
    <property type="entry name" value="SH3"/>
    <property type="match status" value="2"/>
</dbReference>
<dbReference type="SUPFAM" id="SSF57889">
    <property type="entry name" value="Cysteine-rich domain"/>
    <property type="match status" value="1"/>
</dbReference>
<dbReference type="SUPFAM" id="SSF50044">
    <property type="entry name" value="SH3-domain"/>
    <property type="match status" value="2"/>
</dbReference>
<dbReference type="PROSITE" id="PS50002">
    <property type="entry name" value="SH3"/>
    <property type="match status" value="2"/>
</dbReference>
<dbReference type="PROSITE" id="PS00479">
    <property type="entry name" value="ZF_DAG_PE_1"/>
    <property type="match status" value="1"/>
</dbReference>
<dbReference type="PROSITE" id="PS50081">
    <property type="entry name" value="ZF_DAG_PE_2"/>
    <property type="match status" value="1"/>
</dbReference>
<proteinExistence type="evidence at protein level"/>
<gene>
    <name type="primary">STAC3</name>
</gene>
<sequence>MTEKEVLESPKPSFPAETRQSGLQRLKQLLRKGSTGTKEMELPPEPQANGEAVGAGGGPIYYIYEEEEEEEEEEEEPPPEPPKLVNDKPHKFKDHFFKKPKFCDVCARMIVLNNKFGLRCKNCKTNIHEHCQSYVEMQRCFGKIPPGFHRAYSSPLYSNQQYACVKDLSAANRNDPVFETLRTGVIMANKERKKGQADKKNPVAAMMEEEPESARPEEGKPQDGNPEGDKKAEKKTPDDKHKQPGFQQSHYFVALYRFKALEKDDLDFPPGEKITVIDDSNEEWWRGKIGEKVGFFPPNFIIRVRAGERVHRVTRSFVGNREIGQITLKKDQIVVQKGDEAGGYVKVYTGRKVGLFPTDFLEEI</sequence>
<evidence type="ECO:0000250" key="1">
    <source>
        <dbReference type="UniProtKB" id="Q8BZ71"/>
    </source>
</evidence>
<evidence type="ECO:0000255" key="2">
    <source>
        <dbReference type="PROSITE-ProRule" id="PRU00192"/>
    </source>
</evidence>
<evidence type="ECO:0000255" key="3">
    <source>
        <dbReference type="PROSITE-ProRule" id="PRU00226"/>
    </source>
</evidence>
<evidence type="ECO:0000256" key="4">
    <source>
        <dbReference type="SAM" id="MobiDB-lite"/>
    </source>
</evidence>
<evidence type="ECO:0000269" key="5">
    <source>
    </source>
</evidence>
<evidence type="ECO:0000269" key="6">
    <source>
    </source>
</evidence>
<evidence type="ECO:0000269" key="7">
    <source>
    </source>
</evidence>
<evidence type="ECO:0000303" key="8">
    <source>
    </source>
</evidence>
<evidence type="ECO:0000303" key="9">
    <source>
    </source>
</evidence>
<evidence type="ECO:0007744" key="10">
    <source>
        <dbReference type="PDB" id="6B29"/>
    </source>
</evidence>
<evidence type="ECO:0007829" key="11">
    <source>
        <dbReference type="PDB" id="2DB6"/>
    </source>
</evidence>
<evidence type="ECO:0007829" key="12">
    <source>
        <dbReference type="PDB" id="6B29"/>
    </source>
</evidence>
<evidence type="ECO:0007829" key="13">
    <source>
        <dbReference type="PDB" id="6UY9"/>
    </source>
</evidence>
<reference key="1">
    <citation type="journal article" date="2004" name="Nat. Genet.">
        <title>Complete sequencing and characterization of 21,243 full-length human cDNAs.</title>
        <authorList>
            <person name="Ota T."/>
            <person name="Suzuki Y."/>
            <person name="Nishikawa T."/>
            <person name="Otsuki T."/>
            <person name="Sugiyama T."/>
            <person name="Irie R."/>
            <person name="Wakamatsu A."/>
            <person name="Hayashi K."/>
            <person name="Sato H."/>
            <person name="Nagai K."/>
            <person name="Kimura K."/>
            <person name="Makita H."/>
            <person name="Sekine M."/>
            <person name="Obayashi M."/>
            <person name="Nishi T."/>
            <person name="Shibahara T."/>
            <person name="Tanaka T."/>
            <person name="Ishii S."/>
            <person name="Yamamoto J."/>
            <person name="Saito K."/>
            <person name="Kawai Y."/>
            <person name="Isono Y."/>
            <person name="Nakamura Y."/>
            <person name="Nagahari K."/>
            <person name="Murakami K."/>
            <person name="Yasuda T."/>
            <person name="Iwayanagi T."/>
            <person name="Wagatsuma M."/>
            <person name="Shiratori A."/>
            <person name="Sudo H."/>
            <person name="Hosoiri T."/>
            <person name="Kaku Y."/>
            <person name="Kodaira H."/>
            <person name="Kondo H."/>
            <person name="Sugawara M."/>
            <person name="Takahashi M."/>
            <person name="Kanda K."/>
            <person name="Yokoi T."/>
            <person name="Furuya T."/>
            <person name="Kikkawa E."/>
            <person name="Omura Y."/>
            <person name="Abe K."/>
            <person name="Kamihara K."/>
            <person name="Katsuta N."/>
            <person name="Sato K."/>
            <person name="Tanikawa M."/>
            <person name="Yamazaki M."/>
            <person name="Ninomiya K."/>
            <person name="Ishibashi T."/>
            <person name="Yamashita H."/>
            <person name="Murakawa K."/>
            <person name="Fujimori K."/>
            <person name="Tanai H."/>
            <person name="Kimata M."/>
            <person name="Watanabe M."/>
            <person name="Hiraoka S."/>
            <person name="Chiba Y."/>
            <person name="Ishida S."/>
            <person name="Ono Y."/>
            <person name="Takiguchi S."/>
            <person name="Watanabe S."/>
            <person name="Yosida M."/>
            <person name="Hotuta T."/>
            <person name="Kusano J."/>
            <person name="Kanehori K."/>
            <person name="Takahashi-Fujii A."/>
            <person name="Hara H."/>
            <person name="Tanase T.-O."/>
            <person name="Nomura Y."/>
            <person name="Togiya S."/>
            <person name="Komai F."/>
            <person name="Hara R."/>
            <person name="Takeuchi K."/>
            <person name="Arita M."/>
            <person name="Imose N."/>
            <person name="Musashino K."/>
            <person name="Yuuki H."/>
            <person name="Oshima A."/>
            <person name="Sasaki N."/>
            <person name="Aotsuka S."/>
            <person name="Yoshikawa Y."/>
            <person name="Matsunawa H."/>
            <person name="Ichihara T."/>
            <person name="Shiohata N."/>
            <person name="Sano S."/>
            <person name="Moriya S."/>
            <person name="Momiyama H."/>
            <person name="Satoh N."/>
            <person name="Takami S."/>
            <person name="Terashima Y."/>
            <person name="Suzuki O."/>
            <person name="Nakagawa S."/>
            <person name="Senoh A."/>
            <person name="Mizoguchi H."/>
            <person name="Goto Y."/>
            <person name="Shimizu F."/>
            <person name="Wakebe H."/>
            <person name="Hishigaki H."/>
            <person name="Watanabe T."/>
            <person name="Sugiyama A."/>
            <person name="Takemoto M."/>
            <person name="Kawakami B."/>
            <person name="Yamazaki M."/>
            <person name="Watanabe K."/>
            <person name="Kumagai A."/>
            <person name="Itakura S."/>
            <person name="Fukuzumi Y."/>
            <person name="Fujimori Y."/>
            <person name="Komiyama M."/>
            <person name="Tashiro H."/>
            <person name="Tanigami A."/>
            <person name="Fujiwara T."/>
            <person name="Ono T."/>
            <person name="Yamada K."/>
            <person name="Fujii Y."/>
            <person name="Ozaki K."/>
            <person name="Hirao M."/>
            <person name="Ohmori Y."/>
            <person name="Kawabata A."/>
            <person name="Hikiji T."/>
            <person name="Kobatake N."/>
            <person name="Inagaki H."/>
            <person name="Ikema Y."/>
            <person name="Okamoto S."/>
            <person name="Okitani R."/>
            <person name="Kawakami T."/>
            <person name="Noguchi S."/>
            <person name="Itoh T."/>
            <person name="Shigeta K."/>
            <person name="Senba T."/>
            <person name="Matsumura K."/>
            <person name="Nakajima Y."/>
            <person name="Mizuno T."/>
            <person name="Morinaga M."/>
            <person name="Sasaki M."/>
            <person name="Togashi T."/>
            <person name="Oyama M."/>
            <person name="Hata H."/>
            <person name="Watanabe M."/>
            <person name="Komatsu T."/>
            <person name="Mizushima-Sugano J."/>
            <person name="Satoh T."/>
            <person name="Shirai Y."/>
            <person name="Takahashi Y."/>
            <person name="Nakagawa K."/>
            <person name="Okumura K."/>
            <person name="Nagase T."/>
            <person name="Nomura N."/>
            <person name="Kikuchi H."/>
            <person name="Masuho Y."/>
            <person name="Yamashita R."/>
            <person name="Nakai K."/>
            <person name="Yada T."/>
            <person name="Nakamura Y."/>
            <person name="Ohara O."/>
            <person name="Isogai T."/>
            <person name="Sugano S."/>
        </authorList>
    </citation>
    <scope>NUCLEOTIDE SEQUENCE [LARGE SCALE MRNA] (ISOFORMS 1 AND 3)</scope>
    <source>
        <tissue>Skeletal muscle</tissue>
    </source>
</reference>
<reference key="2">
    <citation type="journal article" date="2006" name="Nature">
        <title>The finished DNA sequence of human chromosome 12.</title>
        <authorList>
            <person name="Scherer S.E."/>
            <person name="Muzny D.M."/>
            <person name="Buhay C.J."/>
            <person name="Chen R."/>
            <person name="Cree A."/>
            <person name="Ding Y."/>
            <person name="Dugan-Rocha S."/>
            <person name="Gill R."/>
            <person name="Gunaratne P."/>
            <person name="Harris R.A."/>
            <person name="Hawes A.C."/>
            <person name="Hernandez J."/>
            <person name="Hodgson A.V."/>
            <person name="Hume J."/>
            <person name="Jackson A."/>
            <person name="Khan Z.M."/>
            <person name="Kovar-Smith C."/>
            <person name="Lewis L.R."/>
            <person name="Lozado R.J."/>
            <person name="Metzker M.L."/>
            <person name="Milosavljevic A."/>
            <person name="Miner G.R."/>
            <person name="Montgomery K.T."/>
            <person name="Morgan M.B."/>
            <person name="Nazareth L.V."/>
            <person name="Scott G."/>
            <person name="Sodergren E."/>
            <person name="Song X.-Z."/>
            <person name="Steffen D."/>
            <person name="Lovering R.C."/>
            <person name="Wheeler D.A."/>
            <person name="Worley K.C."/>
            <person name="Yuan Y."/>
            <person name="Zhang Z."/>
            <person name="Adams C.Q."/>
            <person name="Ansari-Lari M.A."/>
            <person name="Ayele M."/>
            <person name="Brown M.J."/>
            <person name="Chen G."/>
            <person name="Chen Z."/>
            <person name="Clerc-Blankenburg K.P."/>
            <person name="Davis C."/>
            <person name="Delgado O."/>
            <person name="Dinh H.H."/>
            <person name="Draper H."/>
            <person name="Gonzalez-Garay M.L."/>
            <person name="Havlak P."/>
            <person name="Jackson L.R."/>
            <person name="Jacob L.S."/>
            <person name="Kelly S.H."/>
            <person name="Li L."/>
            <person name="Li Z."/>
            <person name="Liu J."/>
            <person name="Liu W."/>
            <person name="Lu J."/>
            <person name="Maheshwari M."/>
            <person name="Nguyen B.-V."/>
            <person name="Okwuonu G.O."/>
            <person name="Pasternak S."/>
            <person name="Perez L.M."/>
            <person name="Plopper F.J.H."/>
            <person name="Santibanez J."/>
            <person name="Shen H."/>
            <person name="Tabor P.E."/>
            <person name="Verduzco D."/>
            <person name="Waldron L."/>
            <person name="Wang Q."/>
            <person name="Williams G.A."/>
            <person name="Zhang J."/>
            <person name="Zhou J."/>
            <person name="Allen C.C."/>
            <person name="Amin A.G."/>
            <person name="Anyalebechi V."/>
            <person name="Bailey M."/>
            <person name="Barbaria J.A."/>
            <person name="Bimage K.E."/>
            <person name="Bryant N.P."/>
            <person name="Burch P.E."/>
            <person name="Burkett C.E."/>
            <person name="Burrell K.L."/>
            <person name="Calderon E."/>
            <person name="Cardenas V."/>
            <person name="Carter K."/>
            <person name="Casias K."/>
            <person name="Cavazos I."/>
            <person name="Cavazos S.R."/>
            <person name="Ceasar H."/>
            <person name="Chacko J."/>
            <person name="Chan S.N."/>
            <person name="Chavez D."/>
            <person name="Christopoulos C."/>
            <person name="Chu J."/>
            <person name="Cockrell R."/>
            <person name="Cox C.D."/>
            <person name="Dang M."/>
            <person name="Dathorne S.R."/>
            <person name="David R."/>
            <person name="Davis C.M."/>
            <person name="Davy-Carroll L."/>
            <person name="Deshazo D.R."/>
            <person name="Donlin J.E."/>
            <person name="D'Souza L."/>
            <person name="Eaves K.A."/>
            <person name="Egan A."/>
            <person name="Emery-Cohen A.J."/>
            <person name="Escotto M."/>
            <person name="Flagg N."/>
            <person name="Forbes L.D."/>
            <person name="Gabisi A.M."/>
            <person name="Garza M."/>
            <person name="Hamilton C."/>
            <person name="Henderson N."/>
            <person name="Hernandez O."/>
            <person name="Hines S."/>
            <person name="Hogues M.E."/>
            <person name="Huang M."/>
            <person name="Idlebird D.G."/>
            <person name="Johnson R."/>
            <person name="Jolivet A."/>
            <person name="Jones S."/>
            <person name="Kagan R."/>
            <person name="King L.M."/>
            <person name="Leal B."/>
            <person name="Lebow H."/>
            <person name="Lee S."/>
            <person name="LeVan J.M."/>
            <person name="Lewis L.C."/>
            <person name="London P."/>
            <person name="Lorensuhewa L.M."/>
            <person name="Loulseged H."/>
            <person name="Lovett D.A."/>
            <person name="Lucier A."/>
            <person name="Lucier R.L."/>
            <person name="Ma J."/>
            <person name="Madu R.C."/>
            <person name="Mapua P."/>
            <person name="Martindale A.D."/>
            <person name="Martinez E."/>
            <person name="Massey E."/>
            <person name="Mawhiney S."/>
            <person name="Meador M.G."/>
            <person name="Mendez S."/>
            <person name="Mercado C."/>
            <person name="Mercado I.C."/>
            <person name="Merritt C.E."/>
            <person name="Miner Z.L."/>
            <person name="Minja E."/>
            <person name="Mitchell T."/>
            <person name="Mohabbat F."/>
            <person name="Mohabbat K."/>
            <person name="Montgomery B."/>
            <person name="Moore N."/>
            <person name="Morris S."/>
            <person name="Munidasa M."/>
            <person name="Ngo R.N."/>
            <person name="Nguyen N.B."/>
            <person name="Nickerson E."/>
            <person name="Nwaokelemeh O.O."/>
            <person name="Nwokenkwo S."/>
            <person name="Obregon M."/>
            <person name="Oguh M."/>
            <person name="Oragunye N."/>
            <person name="Oviedo R.J."/>
            <person name="Parish B.J."/>
            <person name="Parker D.N."/>
            <person name="Parrish J."/>
            <person name="Parks K.L."/>
            <person name="Paul H.A."/>
            <person name="Payton B.A."/>
            <person name="Perez A."/>
            <person name="Perrin W."/>
            <person name="Pickens A."/>
            <person name="Primus E.L."/>
            <person name="Pu L.-L."/>
            <person name="Puazo M."/>
            <person name="Quiles M.M."/>
            <person name="Quiroz J.B."/>
            <person name="Rabata D."/>
            <person name="Reeves K."/>
            <person name="Ruiz S.J."/>
            <person name="Shao H."/>
            <person name="Sisson I."/>
            <person name="Sonaike T."/>
            <person name="Sorelle R.P."/>
            <person name="Sutton A.E."/>
            <person name="Svatek A.F."/>
            <person name="Svetz L.A."/>
            <person name="Tamerisa K.S."/>
            <person name="Taylor T.R."/>
            <person name="Teague B."/>
            <person name="Thomas N."/>
            <person name="Thorn R.D."/>
            <person name="Trejos Z.Y."/>
            <person name="Trevino B.K."/>
            <person name="Ukegbu O.N."/>
            <person name="Urban J.B."/>
            <person name="Vasquez L.I."/>
            <person name="Vera V.A."/>
            <person name="Villasana D.M."/>
            <person name="Wang L."/>
            <person name="Ward-Moore S."/>
            <person name="Warren J.T."/>
            <person name="Wei X."/>
            <person name="White F."/>
            <person name="Williamson A.L."/>
            <person name="Wleczyk R."/>
            <person name="Wooden H.S."/>
            <person name="Wooden S.H."/>
            <person name="Yen J."/>
            <person name="Yoon L."/>
            <person name="Yoon V."/>
            <person name="Zorrilla S.E."/>
            <person name="Nelson D."/>
            <person name="Kucherlapati R."/>
            <person name="Weinstock G."/>
            <person name="Gibbs R.A."/>
        </authorList>
    </citation>
    <scope>NUCLEOTIDE SEQUENCE [LARGE SCALE GENOMIC DNA]</scope>
</reference>
<reference key="3">
    <citation type="submission" date="2005-07" db="EMBL/GenBank/DDBJ databases">
        <authorList>
            <person name="Mural R.J."/>
            <person name="Istrail S."/>
            <person name="Sutton G."/>
            <person name="Florea L."/>
            <person name="Halpern A.L."/>
            <person name="Mobarry C.M."/>
            <person name="Lippert R."/>
            <person name="Walenz B."/>
            <person name="Shatkay H."/>
            <person name="Dew I."/>
            <person name="Miller J.R."/>
            <person name="Flanigan M.J."/>
            <person name="Edwards N.J."/>
            <person name="Bolanos R."/>
            <person name="Fasulo D."/>
            <person name="Halldorsson B.V."/>
            <person name="Hannenhalli S."/>
            <person name="Turner R."/>
            <person name="Yooseph S."/>
            <person name="Lu F."/>
            <person name="Nusskern D.R."/>
            <person name="Shue B.C."/>
            <person name="Zheng X.H."/>
            <person name="Zhong F."/>
            <person name="Delcher A.L."/>
            <person name="Huson D.H."/>
            <person name="Kravitz S.A."/>
            <person name="Mouchard L."/>
            <person name="Reinert K."/>
            <person name="Remington K.A."/>
            <person name="Clark A.G."/>
            <person name="Waterman M.S."/>
            <person name="Eichler E.E."/>
            <person name="Adams M.D."/>
            <person name="Hunkapiller M.W."/>
            <person name="Myers E.W."/>
            <person name="Venter J.C."/>
        </authorList>
    </citation>
    <scope>NUCLEOTIDE SEQUENCE [LARGE SCALE GENOMIC DNA]</scope>
</reference>
<reference key="4">
    <citation type="journal article" date="2004" name="Genome Res.">
        <title>The status, quality, and expansion of the NIH full-length cDNA project: the Mammalian Gene Collection (MGC).</title>
        <authorList>
            <consortium name="The MGC Project Team"/>
        </authorList>
    </citation>
    <scope>NUCLEOTIDE SEQUENCE [LARGE SCALE MRNA] (ISOFORM 2)</scope>
    <source>
        <tissue>Muscle</tissue>
    </source>
</reference>
<reference key="5">
    <citation type="journal article" date="2013" name="Nat. Commun.">
        <title>Stac3 is a component of the excitation-contraction coupling machinery and mutated in Native American myopathy.</title>
        <authorList>
            <person name="Horstick E.J."/>
            <person name="Linsley J.W."/>
            <person name="Dowling J.J."/>
            <person name="Hauser M.A."/>
            <person name="McDonald K.K."/>
            <person name="Ashley-Koch A."/>
            <person name="Saint-Amant L."/>
            <person name="Satish A."/>
            <person name="Cui W.W."/>
            <person name="Zhou W."/>
            <person name="Sprague S.M."/>
            <person name="Stamm D.S."/>
            <person name="Powell C.M."/>
            <person name="Speer M.C."/>
            <person name="Franzini-Armstrong C."/>
            <person name="Hirata H."/>
            <person name="Kuwada J.Y."/>
        </authorList>
    </citation>
    <scope>FUNCTION</scope>
    <scope>VARIANT CMYO13 SER-284</scope>
    <scope>INVOLVEMENT IN CMYO13</scope>
</reference>
<reference key="6">
    <citation type="submission" date="2006-06" db="PDB data bank">
        <title>Solution structure of RSGI RUH-051, a C1 domain of STAC3 from human cDNA.</title>
        <authorList>
            <consortium name="RIKEN structural genomics initiative (RSGI)"/>
        </authorList>
    </citation>
    <scope>STRUCTURE BY NMR OF 80-142</scope>
</reference>
<reference evidence="10" key="7">
    <citation type="journal article" date="2017" name="Proc. Natl. Acad. Sci. U.S.A.">
        <title>Structural insights into binding of STAC proteins to voltage-gated calcium channels.</title>
        <authorList>
            <person name="Wong King Yuen S.M."/>
            <person name="Campiglio M."/>
            <person name="Tung C.C."/>
            <person name="Flucher B.E."/>
            <person name="Van Petegem F."/>
        </authorList>
    </citation>
    <scope>X-RAY CRYSTALLOGRAPHY (1.30 ANGSTROMS) OF 309-364</scope>
    <scope>FUNCTION</scope>
    <scope>INTERACTION WITH CACNA1S</scope>
    <scope>CHARACTERIZATION OF VARIANT CMYO13 SER-284</scope>
</reference>
<reference key="8">
    <citation type="journal article" date="2017" name="Am. J. Med. Genet. A">
        <title>Identification of STAC3 variants in non-Native American families with overlapping features of Carey-Fineman-Ziter syndrome and Moebius syndrome.</title>
        <authorList>
            <consortium name="Moebius Syndrome Research Consortium"/>
            <person name="Telegrafi A."/>
            <person name="Webb B.D."/>
            <person name="Robbins S.M."/>
            <person name="Speck-Martins C.E."/>
            <person name="FitzPatrick D."/>
            <person name="Fleming L."/>
            <person name="Redett R."/>
            <person name="Dufke A."/>
            <person name="Houge G."/>
            <person name="van Harssel J.J.T."/>
            <person name="Verloes A."/>
            <person name="Robles A."/>
            <person name="Manoli I."/>
            <person name="Engle E.C."/>
            <person name="Jabs E.W."/>
            <person name="Valle D."/>
            <person name="Carey J."/>
            <person name="Hoover-Fong J.E."/>
            <person name="Sobreira N.L.M."/>
        </authorList>
    </citation>
    <scope>VARIANT CMYO13 SER-284</scope>
    <scope>INVOLVEMENT IN CMYO13</scope>
</reference>
<feature type="chain" id="PRO_0000232582" description="SH3 and cysteine-rich domain-containing protein 3">
    <location>
        <begin position="1"/>
        <end position="364"/>
    </location>
</feature>
<feature type="domain" description="SH3 1" evidence="2">
    <location>
        <begin position="247"/>
        <end position="306"/>
    </location>
</feature>
<feature type="domain" description="SH3 2" evidence="2">
    <location>
        <begin position="307"/>
        <end position="364"/>
    </location>
</feature>
<feature type="zinc finger region" description="Phorbol-ester/DAG-type" evidence="3">
    <location>
        <begin position="89"/>
        <end position="140"/>
    </location>
</feature>
<feature type="region of interest" description="Disordered" evidence="4">
    <location>
        <begin position="1"/>
        <end position="89"/>
    </location>
</feature>
<feature type="region of interest" description="Disordered" evidence="4">
    <location>
        <begin position="189"/>
        <end position="244"/>
    </location>
</feature>
<feature type="compositionally biased region" description="Acidic residues" evidence="4">
    <location>
        <begin position="64"/>
        <end position="78"/>
    </location>
</feature>
<feature type="compositionally biased region" description="Basic and acidic residues" evidence="4">
    <location>
        <begin position="212"/>
        <end position="242"/>
    </location>
</feature>
<feature type="splice variant" id="VSP_055272" description="In isoform 3." evidence="8">
    <location>
        <begin position="1"/>
        <end position="186"/>
    </location>
</feature>
<feature type="splice variant" id="VSP_017914" description="In isoform 2." evidence="9">
    <location>
        <begin position="1"/>
        <end position="39"/>
    </location>
</feature>
<feature type="sequence variant" id="VAR_071313" description="In CMYO13; loss of interaction with CACNA1S; dbSNP:rs140291094." evidence="5 6 7">
    <original>W</original>
    <variation>S</variation>
    <location>
        <position position="284"/>
    </location>
</feature>
<feature type="strand" evidence="11">
    <location>
        <begin position="87"/>
        <end position="89"/>
    </location>
</feature>
<feature type="strand" evidence="11">
    <location>
        <begin position="92"/>
        <end position="96"/>
    </location>
</feature>
<feature type="strand" evidence="11">
    <location>
        <begin position="104"/>
        <end position="106"/>
    </location>
</feature>
<feature type="helix" evidence="11">
    <location>
        <begin position="112"/>
        <end position="115"/>
    </location>
</feature>
<feature type="strand" evidence="11">
    <location>
        <begin position="116"/>
        <end position="123"/>
    </location>
</feature>
<feature type="turn" evidence="11">
    <location>
        <begin position="129"/>
        <end position="132"/>
    </location>
</feature>
<feature type="helix" evidence="11">
    <location>
        <begin position="133"/>
        <end position="135"/>
    </location>
</feature>
<feature type="strand" evidence="11">
    <location>
        <begin position="136"/>
        <end position="139"/>
    </location>
</feature>
<feature type="strand" evidence="13">
    <location>
        <begin position="249"/>
        <end position="254"/>
    </location>
</feature>
<feature type="strand" evidence="13">
    <location>
        <begin position="273"/>
        <end position="278"/>
    </location>
</feature>
<feature type="strand" evidence="13">
    <location>
        <begin position="281"/>
        <end position="283"/>
    </location>
</feature>
<feature type="strand" evidence="13">
    <location>
        <begin position="285"/>
        <end position="289"/>
    </location>
</feature>
<feature type="strand" evidence="13">
    <location>
        <begin position="292"/>
        <end position="296"/>
    </location>
</feature>
<feature type="helix" evidence="13">
    <location>
        <begin position="298"/>
        <end position="300"/>
    </location>
</feature>
<feature type="strand" evidence="13">
    <location>
        <begin position="301"/>
        <end position="305"/>
    </location>
</feature>
<feature type="strand" evidence="12">
    <location>
        <begin position="310"/>
        <end position="313"/>
    </location>
</feature>
<feature type="helix" evidence="12">
    <location>
        <begin position="321"/>
        <end position="323"/>
    </location>
</feature>
<feature type="strand" evidence="12">
    <location>
        <begin position="333"/>
        <end position="341"/>
    </location>
</feature>
<feature type="strand" evidence="12">
    <location>
        <begin position="344"/>
        <end position="348"/>
    </location>
</feature>
<feature type="strand" evidence="12">
    <location>
        <begin position="353"/>
        <end position="357"/>
    </location>
</feature>
<feature type="helix" evidence="12">
    <location>
        <begin position="358"/>
        <end position="360"/>
    </location>
</feature>
<feature type="strand" evidence="12">
    <location>
        <begin position="361"/>
        <end position="364"/>
    </location>
</feature>